<gene>
    <name type="primary">HIS3</name>
</gene>
<reference key="1">
    <citation type="journal article" date="1993" name="Yeast">
        <title>Molecular genetics in Saccharomyces kluyveri: the HIS3 homolog and its use as a selectable marker gene in S. kluyveri and Saccharomyces cerevisiae.</title>
        <authorList>
            <person name="Weinstock K.G."/>
            <person name="Strathern J.N."/>
        </authorList>
    </citation>
    <scope>NUCLEOTIDE SEQUENCE [GENOMIC DNA]</scope>
    <source>
        <strain>ATCC 58438 / CBS 3082 / BCRC 21498 / NBRC 1685 / JCM 7257 / NCYC 543 / NRRL Y-12651</strain>
    </source>
</reference>
<protein>
    <recommendedName>
        <fullName>Imidazoleglycerol-phosphate dehydratase</fullName>
        <shortName>IGPD</shortName>
        <ecNumber>4.2.1.19</ecNumber>
    </recommendedName>
</protein>
<evidence type="ECO:0000305" key="1"/>
<sequence>MTEPAQKKQKQTVQERKAFISRITNETKIQIAISLNGGYIQIKDSILPAKKDDDVASQATQSQVIDIHTGVGFLDHMIHALAKHSGWSLIVECIGDLHIDDHHTTEDCGIALGQAFKEAMGAVRGVKRFGTGFAPLDEALSRAVVDLSNRPFAVIDLGLKREMIGDLSTEMIPHFLESFAEAARITLHVDCLRGFNDHHRSESAFKALAVAIREAISSNGTNDVPSTKGVLM</sequence>
<comment type="catalytic activity">
    <reaction>
        <text>D-erythro-1-(imidazol-4-yl)glycerol 3-phosphate = 3-(imidazol-4-yl)-2-oxopropyl phosphate + H2O</text>
        <dbReference type="Rhea" id="RHEA:11040"/>
        <dbReference type="ChEBI" id="CHEBI:15377"/>
        <dbReference type="ChEBI" id="CHEBI:57766"/>
        <dbReference type="ChEBI" id="CHEBI:58278"/>
        <dbReference type="EC" id="4.2.1.19"/>
    </reaction>
</comment>
<comment type="pathway">
    <text>Amino-acid biosynthesis; L-histidine biosynthesis; L-histidine from 5-phospho-alpha-D-ribose 1-diphosphate: step 6/9.</text>
</comment>
<comment type="similarity">
    <text evidence="1">Belongs to the imidazoleglycerol-phosphate dehydratase family.</text>
</comment>
<feature type="chain" id="PRO_0000158246" description="Imidazoleglycerol-phosphate dehydratase">
    <location>
        <begin position="1"/>
        <end position="232"/>
    </location>
</feature>
<proteinExistence type="inferred from homology"/>
<name>HIS7_LACK1</name>
<organism>
    <name type="scientific">Lachancea kluyveri (strain ATCC 58438 / CBS 3082 / BCRC 21498 / NBRC 1685 / JCM 7257 / NCYC 543 / NRRL Y-12651)</name>
    <name type="common">Yeast</name>
    <name type="synonym">Saccharomyces kluyveri</name>
    <dbReference type="NCBI Taxonomy" id="226302"/>
    <lineage>
        <taxon>Eukaryota</taxon>
        <taxon>Fungi</taxon>
        <taxon>Dikarya</taxon>
        <taxon>Ascomycota</taxon>
        <taxon>Saccharomycotina</taxon>
        <taxon>Saccharomycetes</taxon>
        <taxon>Saccharomycetales</taxon>
        <taxon>Saccharomycetaceae</taxon>
        <taxon>Lachancea</taxon>
    </lineage>
</organism>
<keyword id="KW-0028">Amino-acid biosynthesis</keyword>
<keyword id="KW-0368">Histidine biosynthesis</keyword>
<keyword id="KW-0456">Lyase</keyword>
<dbReference type="EC" id="4.2.1.19"/>
<dbReference type="EMBL" id="Z14125">
    <property type="protein sequence ID" value="CAA78497.1"/>
    <property type="molecule type" value="Genomic_DNA"/>
</dbReference>
<dbReference type="PIR" id="S31235">
    <property type="entry name" value="S31235"/>
</dbReference>
<dbReference type="SMR" id="Q02986"/>
<dbReference type="UniPathway" id="UPA00031">
    <property type="reaction ID" value="UER00011"/>
</dbReference>
<dbReference type="GO" id="GO:0004424">
    <property type="term" value="F:imidazoleglycerol-phosphate dehydratase activity"/>
    <property type="evidence" value="ECO:0007669"/>
    <property type="project" value="UniProtKB-EC"/>
</dbReference>
<dbReference type="GO" id="GO:0000105">
    <property type="term" value="P:L-histidine biosynthetic process"/>
    <property type="evidence" value="ECO:0007669"/>
    <property type="project" value="UniProtKB-UniPathway"/>
</dbReference>
<dbReference type="CDD" id="cd07914">
    <property type="entry name" value="IGPD"/>
    <property type="match status" value="1"/>
</dbReference>
<dbReference type="FunFam" id="3.30.230.40:FF:000005">
    <property type="entry name" value="Imidazoleglycerol-phosphate dehydratase"/>
    <property type="match status" value="1"/>
</dbReference>
<dbReference type="FunFam" id="3.30.230.40:FF:000001">
    <property type="entry name" value="Imidazoleglycerol-phosphate dehydratase HisB"/>
    <property type="match status" value="1"/>
</dbReference>
<dbReference type="Gene3D" id="3.30.230.40">
    <property type="entry name" value="Imidazole glycerol phosphate dehydratase, domain 1"/>
    <property type="match status" value="2"/>
</dbReference>
<dbReference type="HAMAP" id="MF_00076">
    <property type="entry name" value="HisB"/>
    <property type="match status" value="1"/>
</dbReference>
<dbReference type="InterPro" id="IPR038494">
    <property type="entry name" value="IGPD_sf"/>
</dbReference>
<dbReference type="InterPro" id="IPR000807">
    <property type="entry name" value="ImidazoleglycerolP_deHydtase"/>
</dbReference>
<dbReference type="InterPro" id="IPR020565">
    <property type="entry name" value="ImidazoleglycerP_deHydtase_CS"/>
</dbReference>
<dbReference type="InterPro" id="IPR020568">
    <property type="entry name" value="Ribosomal_Su5_D2-typ_SF"/>
</dbReference>
<dbReference type="NCBIfam" id="NF002114">
    <property type="entry name" value="PRK00951.2-4"/>
    <property type="match status" value="1"/>
</dbReference>
<dbReference type="PANTHER" id="PTHR23133:SF2">
    <property type="entry name" value="IMIDAZOLEGLYCEROL-PHOSPHATE DEHYDRATASE"/>
    <property type="match status" value="1"/>
</dbReference>
<dbReference type="PANTHER" id="PTHR23133">
    <property type="entry name" value="IMIDAZOLEGLYCEROL-PHOSPHATE DEHYDRATASE HIS7"/>
    <property type="match status" value="1"/>
</dbReference>
<dbReference type="Pfam" id="PF00475">
    <property type="entry name" value="IGPD"/>
    <property type="match status" value="1"/>
</dbReference>
<dbReference type="SUPFAM" id="SSF54211">
    <property type="entry name" value="Ribosomal protein S5 domain 2-like"/>
    <property type="match status" value="2"/>
</dbReference>
<dbReference type="PROSITE" id="PS00954">
    <property type="entry name" value="IGP_DEHYDRATASE_1"/>
    <property type="match status" value="1"/>
</dbReference>
<dbReference type="PROSITE" id="PS00955">
    <property type="entry name" value="IGP_DEHYDRATASE_2"/>
    <property type="match status" value="1"/>
</dbReference>
<accession>Q02986</accession>